<proteinExistence type="inferred from homology"/>
<keyword id="KW-0687">Ribonucleoprotein</keyword>
<keyword id="KW-0689">Ribosomal protein</keyword>
<keyword id="KW-0694">RNA-binding</keyword>
<keyword id="KW-0699">rRNA-binding</keyword>
<keyword id="KW-0820">tRNA-binding</keyword>
<feature type="chain" id="PRO_1000142911" description="Large ribosomal subunit protein uL16">
    <location>
        <begin position="1"/>
        <end position="137"/>
    </location>
</feature>
<comment type="function">
    <text evidence="1">Binds 23S rRNA and is also seen to make contacts with the A and possibly P site tRNAs.</text>
</comment>
<comment type="subunit">
    <text evidence="1">Part of the 50S ribosomal subunit.</text>
</comment>
<comment type="similarity">
    <text evidence="1">Belongs to the universal ribosomal protein uL16 family.</text>
</comment>
<sequence length="137" mass="15466">MLQPKRTKFRKVHKGRNTGLAHRGSTVSFGSIAIKATERGRMTARQIEAARRTISRRIKRGGKIFIRVFPDKPITEKPLEVRMGNGKGNVEYWVCEIKPGKILYEIEGVNEDLAREAFALAAAKLPFKTTIVTRTVM</sequence>
<dbReference type="EMBL" id="CU459141">
    <property type="protein sequence ID" value="CAM85389.1"/>
    <property type="molecule type" value="Genomic_DNA"/>
</dbReference>
<dbReference type="RefSeq" id="WP_000941215.1">
    <property type="nucleotide sequence ID" value="NZ_JBDGFB010000011.1"/>
</dbReference>
<dbReference type="SMR" id="B0V6X5"/>
<dbReference type="EnsemblBacteria" id="CAM85389">
    <property type="protein sequence ID" value="CAM85389"/>
    <property type="gene ID" value="ABAYE0415"/>
</dbReference>
<dbReference type="GeneID" id="92895310"/>
<dbReference type="KEGG" id="aby:ABAYE0415"/>
<dbReference type="HOGENOM" id="CLU_078858_2_1_6"/>
<dbReference type="GO" id="GO:0022625">
    <property type="term" value="C:cytosolic large ribosomal subunit"/>
    <property type="evidence" value="ECO:0007669"/>
    <property type="project" value="TreeGrafter"/>
</dbReference>
<dbReference type="GO" id="GO:0019843">
    <property type="term" value="F:rRNA binding"/>
    <property type="evidence" value="ECO:0007669"/>
    <property type="project" value="UniProtKB-UniRule"/>
</dbReference>
<dbReference type="GO" id="GO:0003735">
    <property type="term" value="F:structural constituent of ribosome"/>
    <property type="evidence" value="ECO:0007669"/>
    <property type="project" value="InterPro"/>
</dbReference>
<dbReference type="GO" id="GO:0000049">
    <property type="term" value="F:tRNA binding"/>
    <property type="evidence" value="ECO:0007669"/>
    <property type="project" value="UniProtKB-KW"/>
</dbReference>
<dbReference type="GO" id="GO:0006412">
    <property type="term" value="P:translation"/>
    <property type="evidence" value="ECO:0007669"/>
    <property type="project" value="UniProtKB-UniRule"/>
</dbReference>
<dbReference type="CDD" id="cd01433">
    <property type="entry name" value="Ribosomal_L16_L10e"/>
    <property type="match status" value="1"/>
</dbReference>
<dbReference type="FunFam" id="3.90.1170.10:FF:000001">
    <property type="entry name" value="50S ribosomal protein L16"/>
    <property type="match status" value="1"/>
</dbReference>
<dbReference type="Gene3D" id="3.90.1170.10">
    <property type="entry name" value="Ribosomal protein L10e/L16"/>
    <property type="match status" value="1"/>
</dbReference>
<dbReference type="HAMAP" id="MF_01342">
    <property type="entry name" value="Ribosomal_uL16"/>
    <property type="match status" value="1"/>
</dbReference>
<dbReference type="InterPro" id="IPR047873">
    <property type="entry name" value="Ribosomal_uL16"/>
</dbReference>
<dbReference type="InterPro" id="IPR000114">
    <property type="entry name" value="Ribosomal_uL16_bact-type"/>
</dbReference>
<dbReference type="InterPro" id="IPR020798">
    <property type="entry name" value="Ribosomal_uL16_CS"/>
</dbReference>
<dbReference type="InterPro" id="IPR016180">
    <property type="entry name" value="Ribosomal_uL16_dom"/>
</dbReference>
<dbReference type="InterPro" id="IPR036920">
    <property type="entry name" value="Ribosomal_uL16_sf"/>
</dbReference>
<dbReference type="NCBIfam" id="TIGR01164">
    <property type="entry name" value="rplP_bact"/>
    <property type="match status" value="1"/>
</dbReference>
<dbReference type="PANTHER" id="PTHR12220">
    <property type="entry name" value="50S/60S RIBOSOMAL PROTEIN L16"/>
    <property type="match status" value="1"/>
</dbReference>
<dbReference type="PANTHER" id="PTHR12220:SF13">
    <property type="entry name" value="LARGE RIBOSOMAL SUBUNIT PROTEIN UL16M"/>
    <property type="match status" value="1"/>
</dbReference>
<dbReference type="Pfam" id="PF00252">
    <property type="entry name" value="Ribosomal_L16"/>
    <property type="match status" value="1"/>
</dbReference>
<dbReference type="PRINTS" id="PR00060">
    <property type="entry name" value="RIBOSOMALL16"/>
</dbReference>
<dbReference type="SUPFAM" id="SSF54686">
    <property type="entry name" value="Ribosomal protein L16p/L10e"/>
    <property type="match status" value="1"/>
</dbReference>
<dbReference type="PROSITE" id="PS00701">
    <property type="entry name" value="RIBOSOMAL_L16_2"/>
    <property type="match status" value="1"/>
</dbReference>
<protein>
    <recommendedName>
        <fullName evidence="1">Large ribosomal subunit protein uL16</fullName>
    </recommendedName>
    <alternativeName>
        <fullName evidence="2">50S ribosomal protein L16</fullName>
    </alternativeName>
</protein>
<accession>B0V6X5</accession>
<gene>
    <name evidence="1" type="primary">rplP</name>
    <name type="ordered locus">ABAYE0415</name>
</gene>
<organism>
    <name type="scientific">Acinetobacter baumannii (strain AYE)</name>
    <dbReference type="NCBI Taxonomy" id="509173"/>
    <lineage>
        <taxon>Bacteria</taxon>
        <taxon>Pseudomonadati</taxon>
        <taxon>Pseudomonadota</taxon>
        <taxon>Gammaproteobacteria</taxon>
        <taxon>Moraxellales</taxon>
        <taxon>Moraxellaceae</taxon>
        <taxon>Acinetobacter</taxon>
        <taxon>Acinetobacter calcoaceticus/baumannii complex</taxon>
    </lineage>
</organism>
<evidence type="ECO:0000255" key="1">
    <source>
        <dbReference type="HAMAP-Rule" id="MF_01342"/>
    </source>
</evidence>
<evidence type="ECO:0000305" key="2"/>
<reference key="1">
    <citation type="journal article" date="2008" name="PLoS ONE">
        <title>Comparative analysis of Acinetobacters: three genomes for three lifestyles.</title>
        <authorList>
            <person name="Vallenet D."/>
            <person name="Nordmann P."/>
            <person name="Barbe V."/>
            <person name="Poirel L."/>
            <person name="Mangenot S."/>
            <person name="Bataille E."/>
            <person name="Dossat C."/>
            <person name="Gas S."/>
            <person name="Kreimeyer A."/>
            <person name="Lenoble P."/>
            <person name="Oztas S."/>
            <person name="Poulain J."/>
            <person name="Segurens B."/>
            <person name="Robert C."/>
            <person name="Abergel C."/>
            <person name="Claverie J.-M."/>
            <person name="Raoult D."/>
            <person name="Medigue C."/>
            <person name="Weissenbach J."/>
            <person name="Cruveiller S."/>
        </authorList>
    </citation>
    <scope>NUCLEOTIDE SEQUENCE [LARGE SCALE GENOMIC DNA]</scope>
    <source>
        <strain>AYE</strain>
    </source>
</reference>
<name>RL16_ACIBY</name>